<protein>
    <recommendedName>
        <fullName evidence="1">Vacuolar membrane protease</fullName>
        <ecNumber evidence="6">3.4.-.-</ecNumber>
    </recommendedName>
    <alternativeName>
        <fullName evidence="1">FXNA-related family protease 1</fullName>
    </alternativeName>
</protein>
<proteinExistence type="inferred from homology"/>
<dbReference type="EC" id="3.4.-.-" evidence="6"/>
<dbReference type="EMBL" id="DS027688">
    <property type="protein sequence ID" value="EAW23175.1"/>
    <property type="molecule type" value="Genomic_DNA"/>
</dbReference>
<dbReference type="RefSeq" id="XP_001265072.1">
    <property type="nucleotide sequence ID" value="XM_001265071.1"/>
</dbReference>
<dbReference type="SMR" id="A1D432"/>
<dbReference type="STRING" id="331117.A1D432"/>
<dbReference type="EnsemblFungi" id="EAW23175">
    <property type="protein sequence ID" value="EAW23175"/>
    <property type="gene ID" value="NFIA_018760"/>
</dbReference>
<dbReference type="GeneID" id="4591208"/>
<dbReference type="KEGG" id="nfi:NFIA_018760"/>
<dbReference type="VEuPathDB" id="FungiDB:NFIA_018760"/>
<dbReference type="eggNOG" id="KOG2194">
    <property type="taxonomic scope" value="Eukaryota"/>
</dbReference>
<dbReference type="HOGENOM" id="CLU_006412_1_0_1"/>
<dbReference type="OMA" id="TPWPVTI"/>
<dbReference type="OrthoDB" id="10257471at2759"/>
<dbReference type="Proteomes" id="UP000006702">
    <property type="component" value="Unassembled WGS sequence"/>
</dbReference>
<dbReference type="GO" id="GO:0005774">
    <property type="term" value="C:vacuolar membrane"/>
    <property type="evidence" value="ECO:0007669"/>
    <property type="project" value="UniProtKB-SubCell"/>
</dbReference>
<dbReference type="GO" id="GO:0046872">
    <property type="term" value="F:metal ion binding"/>
    <property type="evidence" value="ECO:0007669"/>
    <property type="project" value="UniProtKB-KW"/>
</dbReference>
<dbReference type="GO" id="GO:0008235">
    <property type="term" value="F:metalloexopeptidase activity"/>
    <property type="evidence" value="ECO:0007669"/>
    <property type="project" value="InterPro"/>
</dbReference>
<dbReference type="GO" id="GO:0006508">
    <property type="term" value="P:proteolysis"/>
    <property type="evidence" value="ECO:0007669"/>
    <property type="project" value="UniProtKB-KW"/>
</dbReference>
<dbReference type="CDD" id="cd03875">
    <property type="entry name" value="M28_Fxna_like"/>
    <property type="match status" value="1"/>
</dbReference>
<dbReference type="FunFam" id="3.40.630.10:FF:000057">
    <property type="entry name" value="Vacuolar membrane protease"/>
    <property type="match status" value="1"/>
</dbReference>
<dbReference type="Gene3D" id="3.40.630.10">
    <property type="entry name" value="Zn peptidases"/>
    <property type="match status" value="1"/>
</dbReference>
<dbReference type="InterPro" id="IPR048024">
    <property type="entry name" value="Fxna-like_M28_dom"/>
</dbReference>
<dbReference type="InterPro" id="IPR045175">
    <property type="entry name" value="M28_fam"/>
</dbReference>
<dbReference type="InterPro" id="IPR007484">
    <property type="entry name" value="Peptidase_M28"/>
</dbReference>
<dbReference type="InterPro" id="IPR053975">
    <property type="entry name" value="PFF1_C"/>
</dbReference>
<dbReference type="InterPro" id="IPR053976">
    <property type="entry name" value="PFF1_TM"/>
</dbReference>
<dbReference type="PANTHER" id="PTHR12147">
    <property type="entry name" value="METALLOPEPTIDASE M28 FAMILY MEMBER"/>
    <property type="match status" value="1"/>
</dbReference>
<dbReference type="PANTHER" id="PTHR12147:SF58">
    <property type="entry name" value="VACUOLAR MEMBRANE PROTEASE"/>
    <property type="match status" value="1"/>
</dbReference>
<dbReference type="Pfam" id="PF04389">
    <property type="entry name" value="Peptidase_M28"/>
    <property type="match status" value="1"/>
</dbReference>
<dbReference type="Pfam" id="PF22250">
    <property type="entry name" value="PFF1_C"/>
    <property type="match status" value="1"/>
</dbReference>
<dbReference type="Pfam" id="PF22251">
    <property type="entry name" value="PFF1_TM"/>
    <property type="match status" value="1"/>
</dbReference>
<dbReference type="SUPFAM" id="SSF53187">
    <property type="entry name" value="Zn-dependent exopeptidases"/>
    <property type="match status" value="1"/>
</dbReference>
<sequence>MARPSLSRSNPLGFTPWPVTVITAVVYLALVVPLLVVHHVVPSAPSSSPKGLNLTEAWTDLQVLTNGFHPYNSHRNDEVHEWLLKRILELINSAPPASEYESVDEAKPDIVVFDDTQSNLTFSGRASGLGVYFESTNIMVYIRGWEEDKERWWEDPHGRPAGKGGVLVNAHYDSVSTGYGATDDGVGVVSCLQLIKYFTTPGHVPRRGLVLLFNNGEEDFLNGARVYSQHPISQLPHTFLNLEGAGAGGRATLFRSSDAEVTKPYMRAPHPFGSVLSANGFEAGLISSQTDYVVFEGDLGLRGLDVAFMEPRARYHTDEDDARHTSLDSVWHMLSAAVATTEGLVSDASGRFEGLPREDGRIASGSGPRGVWFDLFGSAFVVFELHTLFALSVTLLVVAPLVLLVTSIALNRADKMYLFRASASPEDSDGSEAVLLHGVRGFFRFPFLLVIPTAVTVGLAYLVTKFNPYIIHSSEYAVWSMMISAWVFLAWFVSRVADFARPSAFHRVYTLTWLFLVEWVLLVISTVYENKYGLAGGYFVFFAFAGTFLATWISYLELFALPRKSEYATQLALPSRRASSHGSRLGTASGEDVEDGEDEDEDDDGTTAEATETTSLLRGQRTTFANYVRVTGDYLRDDGDEPRQPNLYGHEQAWSIHLPKWVWVLQFLLTAPLVLTFVGPLALLLTSALRQTGQDGSSSLFIYIAVAALTTLLFIPLLPFIHRYTHHIPLFLLCVFAGTLIYNLVAFPFSPANRLKLFFIQEVDLDTGVNHASLSGAYPFVHDVASSLPSTAGQNITCDLDLLRPKCSWHGIPPQVVQPAEASKMKDWLSYNITRSDAEPKAQLSISGRNTRACKLVFDRPVLSFTVADSAYDPRFPHVSPDGTKEIRLWSREWGHTWTVDVEWAADTEETDEKGLRLSGRVVCLWSDGNTAGVIPALDEVRRYVPVWVGVSKLSDGLVEGSRRFEI</sequence>
<accession>A1D432</accession>
<evidence type="ECO:0000250" key="1">
    <source>
        <dbReference type="UniProtKB" id="P38244"/>
    </source>
</evidence>
<evidence type="ECO:0000250" key="2">
    <source>
        <dbReference type="UniProtKB" id="P80561"/>
    </source>
</evidence>
<evidence type="ECO:0000255" key="3"/>
<evidence type="ECO:0000255" key="4">
    <source>
        <dbReference type="PROSITE-ProRule" id="PRU00498"/>
    </source>
</evidence>
<evidence type="ECO:0000256" key="5">
    <source>
        <dbReference type="SAM" id="MobiDB-lite"/>
    </source>
</evidence>
<evidence type="ECO:0000305" key="6"/>
<gene>
    <name type="ORF">NFIA_018760</name>
</gene>
<keyword id="KW-0325">Glycoprotein</keyword>
<keyword id="KW-0378">Hydrolase</keyword>
<keyword id="KW-0472">Membrane</keyword>
<keyword id="KW-0479">Metal-binding</keyword>
<keyword id="KW-0482">Metalloprotease</keyword>
<keyword id="KW-0645">Protease</keyword>
<keyword id="KW-1185">Reference proteome</keyword>
<keyword id="KW-0812">Transmembrane</keyword>
<keyword id="KW-1133">Transmembrane helix</keyword>
<keyword id="KW-0926">Vacuole</keyword>
<keyword id="KW-0862">Zinc</keyword>
<feature type="chain" id="PRO_0000411726" description="Vacuolar membrane protease">
    <location>
        <begin position="1"/>
        <end position="967"/>
    </location>
</feature>
<feature type="topological domain" description="Cytoplasmic" evidence="1">
    <location>
        <begin position="1"/>
        <end position="16"/>
    </location>
</feature>
<feature type="transmembrane region" description="Helical; Name=1" evidence="3">
    <location>
        <begin position="17"/>
        <end position="37"/>
    </location>
</feature>
<feature type="topological domain" description="Vacuolar" evidence="1">
    <location>
        <begin position="38"/>
        <end position="387"/>
    </location>
</feature>
<feature type="transmembrane region" description="Helical; Name=2" evidence="3">
    <location>
        <begin position="388"/>
        <end position="408"/>
    </location>
</feature>
<feature type="topological domain" description="Cytoplasmic" evidence="1">
    <location>
        <begin position="409"/>
        <end position="441"/>
    </location>
</feature>
<feature type="transmembrane region" description="Helical; Name=3" evidence="3">
    <location>
        <begin position="442"/>
        <end position="462"/>
    </location>
</feature>
<feature type="topological domain" description="Vacuolar" evidence="1">
    <location>
        <begin position="463"/>
        <end position="472"/>
    </location>
</feature>
<feature type="transmembrane region" description="Helical; Name=4" evidence="3">
    <location>
        <begin position="473"/>
        <end position="493"/>
    </location>
</feature>
<feature type="topological domain" description="Cytoplasmic" evidence="1">
    <location>
        <begin position="494"/>
        <end position="507"/>
    </location>
</feature>
<feature type="transmembrane region" description="Helical; Name=5" evidence="3">
    <location>
        <begin position="508"/>
        <end position="528"/>
    </location>
</feature>
<feature type="topological domain" description="Vacuolar" evidence="1">
    <location>
        <begin position="529"/>
        <end position="532"/>
    </location>
</feature>
<feature type="transmembrane region" description="Helical; Name=6" evidence="3">
    <location>
        <begin position="533"/>
        <end position="553"/>
    </location>
</feature>
<feature type="topological domain" description="Cytoplasmic" evidence="1">
    <location>
        <begin position="554"/>
        <end position="663"/>
    </location>
</feature>
<feature type="transmembrane region" description="Helical; Name=7" evidence="3">
    <location>
        <begin position="664"/>
        <end position="684"/>
    </location>
</feature>
<feature type="topological domain" description="Vacuolar" evidence="1">
    <location>
        <begin position="685"/>
        <end position="700"/>
    </location>
</feature>
<feature type="transmembrane region" description="Helical; Name=8" evidence="3">
    <location>
        <begin position="701"/>
        <end position="721"/>
    </location>
</feature>
<feature type="topological domain" description="Cytoplasmic" evidence="1">
    <location>
        <begin position="722"/>
        <end position="727"/>
    </location>
</feature>
<feature type="transmembrane region" description="Helical; Name=9" evidence="3">
    <location>
        <begin position="728"/>
        <end position="748"/>
    </location>
</feature>
<feature type="topological domain" description="Vacuolar" evidence="1">
    <location>
        <begin position="749"/>
        <end position="967"/>
    </location>
</feature>
<feature type="region of interest" description="Disordered" evidence="5">
    <location>
        <begin position="579"/>
        <end position="612"/>
    </location>
</feature>
<feature type="compositionally biased region" description="Acidic residues" evidence="5">
    <location>
        <begin position="591"/>
        <end position="606"/>
    </location>
</feature>
<feature type="active site" description="Proton acceptor" evidence="2">
    <location>
        <position position="217"/>
    </location>
</feature>
<feature type="binding site" evidence="2">
    <location>
        <position position="171"/>
    </location>
    <ligand>
        <name>Zn(2+)</name>
        <dbReference type="ChEBI" id="CHEBI:29105"/>
        <label>1</label>
        <note>catalytic</note>
    </ligand>
</feature>
<feature type="binding site" evidence="2">
    <location>
        <position position="183"/>
    </location>
    <ligand>
        <name>Zn(2+)</name>
        <dbReference type="ChEBI" id="CHEBI:29105"/>
        <label>1</label>
        <note>catalytic</note>
    </ligand>
</feature>
<feature type="binding site" evidence="2">
    <location>
        <position position="183"/>
    </location>
    <ligand>
        <name>Zn(2+)</name>
        <dbReference type="ChEBI" id="CHEBI:29105"/>
        <label>2</label>
        <note>catalytic</note>
    </ligand>
</feature>
<feature type="binding site" evidence="2">
    <location>
        <position position="218"/>
    </location>
    <ligand>
        <name>Zn(2+)</name>
        <dbReference type="ChEBI" id="CHEBI:29105"/>
        <label>2</label>
        <note>catalytic</note>
    </ligand>
</feature>
<feature type="binding site" evidence="2">
    <location>
        <position position="243"/>
    </location>
    <ligand>
        <name>Zn(2+)</name>
        <dbReference type="ChEBI" id="CHEBI:29105"/>
        <label>1</label>
        <note>catalytic</note>
    </ligand>
</feature>
<feature type="binding site" evidence="2">
    <location>
        <position position="316"/>
    </location>
    <ligand>
        <name>Zn(2+)</name>
        <dbReference type="ChEBI" id="CHEBI:29105"/>
        <label>2</label>
        <note>catalytic</note>
    </ligand>
</feature>
<feature type="site" description="Transition state stabilizer" evidence="2">
    <location>
        <position position="315"/>
    </location>
</feature>
<feature type="glycosylation site" description="N-linked (GlcNAc...) asparagine" evidence="4">
    <location>
        <position position="53"/>
    </location>
</feature>
<feature type="glycosylation site" description="N-linked (GlcNAc...) asparagine" evidence="4">
    <location>
        <position position="119"/>
    </location>
</feature>
<feature type="glycosylation site" description="N-linked (GlcNAc...) asparagine" evidence="4">
    <location>
        <position position="795"/>
    </location>
</feature>
<feature type="glycosylation site" description="N-linked (GlcNAc...) asparagine" evidence="4">
    <location>
        <position position="832"/>
    </location>
</feature>
<organism>
    <name type="scientific">Neosartorya fischeri (strain ATCC 1020 / DSM 3700 / CBS 544.65 / FGSC A1164 / JCM 1740 / NRRL 181 / WB 181)</name>
    <name type="common">Aspergillus fischerianus</name>
    <dbReference type="NCBI Taxonomy" id="331117"/>
    <lineage>
        <taxon>Eukaryota</taxon>
        <taxon>Fungi</taxon>
        <taxon>Dikarya</taxon>
        <taxon>Ascomycota</taxon>
        <taxon>Pezizomycotina</taxon>
        <taxon>Eurotiomycetes</taxon>
        <taxon>Eurotiomycetidae</taxon>
        <taxon>Eurotiales</taxon>
        <taxon>Aspergillaceae</taxon>
        <taxon>Aspergillus</taxon>
        <taxon>Aspergillus subgen. Fumigati</taxon>
    </lineage>
</organism>
<comment type="function">
    <text evidence="1">May be involved in vacuolar sorting and osmoregulation.</text>
</comment>
<comment type="cofactor">
    <cofactor evidence="2">
        <name>Zn(2+)</name>
        <dbReference type="ChEBI" id="CHEBI:29105"/>
    </cofactor>
    <text evidence="2">Binds 2 Zn(2+) ions per subunit.</text>
</comment>
<comment type="subcellular location">
    <subcellularLocation>
        <location evidence="1">Vacuole membrane</location>
        <topology evidence="3">Multi-pass membrane protein</topology>
    </subcellularLocation>
</comment>
<comment type="similarity">
    <text evidence="6">Belongs to the peptidase M28 family.</text>
</comment>
<reference key="1">
    <citation type="journal article" date="2008" name="PLoS Genet.">
        <title>Genomic islands in the pathogenic filamentous fungus Aspergillus fumigatus.</title>
        <authorList>
            <person name="Fedorova N.D."/>
            <person name="Khaldi N."/>
            <person name="Joardar V.S."/>
            <person name="Maiti R."/>
            <person name="Amedeo P."/>
            <person name="Anderson M.J."/>
            <person name="Crabtree J."/>
            <person name="Silva J.C."/>
            <person name="Badger J.H."/>
            <person name="Albarraq A."/>
            <person name="Angiuoli S."/>
            <person name="Bussey H."/>
            <person name="Bowyer P."/>
            <person name="Cotty P.J."/>
            <person name="Dyer P.S."/>
            <person name="Egan A."/>
            <person name="Galens K."/>
            <person name="Fraser-Liggett C.M."/>
            <person name="Haas B.J."/>
            <person name="Inman J.M."/>
            <person name="Kent R."/>
            <person name="Lemieux S."/>
            <person name="Malavazi I."/>
            <person name="Orvis J."/>
            <person name="Roemer T."/>
            <person name="Ronning C.M."/>
            <person name="Sundaram J.P."/>
            <person name="Sutton G."/>
            <person name="Turner G."/>
            <person name="Venter J.C."/>
            <person name="White O.R."/>
            <person name="Whitty B.R."/>
            <person name="Youngman P."/>
            <person name="Wolfe K.H."/>
            <person name="Goldman G.H."/>
            <person name="Wortman J.R."/>
            <person name="Jiang B."/>
            <person name="Denning D.W."/>
            <person name="Nierman W.C."/>
        </authorList>
    </citation>
    <scope>NUCLEOTIDE SEQUENCE [LARGE SCALE GENOMIC DNA]</scope>
    <source>
        <strain>ATCC 1020 / DSM 3700 / CBS 544.65 / FGSC A1164 / JCM 1740 / NRRL 181 / WB 181</strain>
    </source>
</reference>
<name>PFF1_NEOFI</name>